<evidence type="ECO:0000250" key="1"/>
<evidence type="ECO:0000255" key="2"/>
<evidence type="ECO:0000255" key="3">
    <source>
        <dbReference type="PROSITE-ProRule" id="PRU00059"/>
    </source>
</evidence>
<evidence type="ECO:0000255" key="4">
    <source>
        <dbReference type="PROSITE-ProRule" id="PRU00076"/>
    </source>
</evidence>
<evidence type="ECO:0000255" key="5">
    <source>
        <dbReference type="PROSITE-ProRule" id="PRU01211"/>
    </source>
</evidence>
<evidence type="ECO:0000269" key="6">
    <source>
    </source>
</evidence>
<evidence type="ECO:0000269" key="7">
    <source>
    </source>
</evidence>
<evidence type="ECO:0000269" key="8">
    <source>
    </source>
</evidence>
<evidence type="ECO:0000303" key="9">
    <source>
    </source>
</evidence>
<evidence type="ECO:0000305" key="10"/>
<evidence type="ECO:0007829" key="11">
    <source>
        <dbReference type="PDB" id="3EDI"/>
    </source>
</evidence>
<gene>
    <name type="primary">TLL1</name>
    <name type="synonym">TLL</name>
</gene>
<proteinExistence type="evidence at protein level"/>
<dbReference type="EC" id="3.4.24.-"/>
<dbReference type="EMBL" id="U91963">
    <property type="protein sequence ID" value="AAB93878.1"/>
    <property type="molecule type" value="mRNA"/>
</dbReference>
<dbReference type="EMBL" id="AF282732">
    <property type="protein sequence ID" value="AAF86287.1"/>
    <property type="molecule type" value="mRNA"/>
</dbReference>
<dbReference type="EMBL" id="CH471056">
    <property type="protein sequence ID" value="EAX04813.1"/>
    <property type="molecule type" value="Genomic_DNA"/>
</dbReference>
<dbReference type="EMBL" id="BC016922">
    <property type="protein sequence ID" value="AAH16922.1"/>
    <property type="molecule type" value="mRNA"/>
</dbReference>
<dbReference type="EMBL" id="BC136429">
    <property type="protein sequence ID" value="AAI36430.1"/>
    <property type="molecule type" value="mRNA"/>
</dbReference>
<dbReference type="EMBL" id="BC136430">
    <property type="protein sequence ID" value="AAI36431.1"/>
    <property type="molecule type" value="mRNA"/>
</dbReference>
<dbReference type="CCDS" id="CCDS3811.1">
    <molecule id="O43897-1"/>
</dbReference>
<dbReference type="CCDS" id="CCDS56342.1">
    <molecule id="O43897-2"/>
</dbReference>
<dbReference type="RefSeq" id="NP_001191689.1">
    <molecule id="O43897-2"/>
    <property type="nucleotide sequence ID" value="NM_001204760.2"/>
</dbReference>
<dbReference type="RefSeq" id="NP_036596.3">
    <molecule id="O43897-1"/>
    <property type="nucleotide sequence ID" value="NM_012464.4"/>
</dbReference>
<dbReference type="PDB" id="3EDI">
    <property type="method" value="X-ray"/>
    <property type="resolution" value="1.40 A"/>
    <property type="chains" value="A=148-348"/>
</dbReference>
<dbReference type="PDBsum" id="3EDI"/>
<dbReference type="SMR" id="O43897"/>
<dbReference type="BioGRID" id="112947">
    <property type="interactions" value="9"/>
</dbReference>
<dbReference type="FunCoup" id="O43897">
    <property type="interactions" value="316"/>
</dbReference>
<dbReference type="IntAct" id="O43897">
    <property type="interactions" value="6"/>
</dbReference>
<dbReference type="STRING" id="9606.ENSP00000061240"/>
<dbReference type="BindingDB" id="O43897"/>
<dbReference type="ChEMBL" id="CHEMBL4295664"/>
<dbReference type="MEROPS" id="M12.016"/>
<dbReference type="GlyConnect" id="1819">
    <property type="glycosylation" value="1 N-Linked glycan (1 site)"/>
</dbReference>
<dbReference type="GlyCosmos" id="O43897">
    <property type="glycosylation" value="4 sites, 1 glycan"/>
</dbReference>
<dbReference type="GlyGen" id="O43897">
    <property type="glycosylation" value="7 sites, 5 N-linked glycans (4 sites)"/>
</dbReference>
<dbReference type="iPTMnet" id="O43897"/>
<dbReference type="PhosphoSitePlus" id="O43897"/>
<dbReference type="BioMuta" id="TLL1"/>
<dbReference type="MassIVE" id="O43897"/>
<dbReference type="PaxDb" id="9606-ENSP00000061240"/>
<dbReference type="PeptideAtlas" id="O43897"/>
<dbReference type="ProteomicsDB" id="49221">
    <molecule id="O43897-1"/>
</dbReference>
<dbReference type="ProteomicsDB" id="49222">
    <molecule id="O43897-2"/>
</dbReference>
<dbReference type="Antibodypedia" id="28327">
    <property type="antibodies" value="116 antibodies from 19 providers"/>
</dbReference>
<dbReference type="DNASU" id="7092"/>
<dbReference type="Ensembl" id="ENST00000061240.7">
    <molecule id="O43897-1"/>
    <property type="protein sequence ID" value="ENSP00000061240.2"/>
    <property type="gene ID" value="ENSG00000038295.8"/>
</dbReference>
<dbReference type="Ensembl" id="ENST00000513213.5">
    <molecule id="O43897-2"/>
    <property type="protein sequence ID" value="ENSP00000422937.1"/>
    <property type="gene ID" value="ENSG00000038295.8"/>
</dbReference>
<dbReference type="GeneID" id="7092"/>
<dbReference type="KEGG" id="hsa:7092"/>
<dbReference type="MANE-Select" id="ENST00000061240.7">
    <property type="protein sequence ID" value="ENSP00000061240.2"/>
    <property type="RefSeq nucleotide sequence ID" value="NM_012464.5"/>
    <property type="RefSeq protein sequence ID" value="NP_036596.3"/>
</dbReference>
<dbReference type="UCSC" id="uc003irh.3">
    <molecule id="O43897-1"/>
    <property type="organism name" value="human"/>
</dbReference>
<dbReference type="AGR" id="HGNC:11843"/>
<dbReference type="CTD" id="7092"/>
<dbReference type="DisGeNET" id="7092"/>
<dbReference type="GeneCards" id="TLL1"/>
<dbReference type="HGNC" id="HGNC:11843">
    <property type="gene designation" value="TLL1"/>
</dbReference>
<dbReference type="HPA" id="ENSG00000038295">
    <property type="expression patterns" value="Tissue enhanced (brain, placenta)"/>
</dbReference>
<dbReference type="MalaCards" id="TLL1"/>
<dbReference type="MIM" id="606742">
    <property type="type" value="gene"/>
</dbReference>
<dbReference type="MIM" id="613087">
    <property type="type" value="phenotype"/>
</dbReference>
<dbReference type="neXtProt" id="NX_O43897"/>
<dbReference type="OpenTargets" id="ENSG00000038295"/>
<dbReference type="Orphanet" id="99106">
    <property type="disease" value="Atrial septal defect, ostium primum type"/>
</dbReference>
<dbReference type="Orphanet" id="99103">
    <property type="disease" value="Atrial septal defect, ostium secundum type"/>
</dbReference>
<dbReference type="PharmGKB" id="PA36545"/>
<dbReference type="VEuPathDB" id="HostDB:ENSG00000038295"/>
<dbReference type="eggNOG" id="KOG3714">
    <property type="taxonomic scope" value="Eukaryota"/>
</dbReference>
<dbReference type="GeneTree" id="ENSGT00940000157225"/>
<dbReference type="HOGENOM" id="CLU_005140_0_0_1"/>
<dbReference type="InParanoid" id="O43897"/>
<dbReference type="OrthoDB" id="431034at2759"/>
<dbReference type="PAN-GO" id="O43897">
    <property type="GO annotations" value="4 GO annotations based on evolutionary models"/>
</dbReference>
<dbReference type="PhylomeDB" id="O43897"/>
<dbReference type="TreeFam" id="TF314351"/>
<dbReference type="PathwayCommons" id="O43897"/>
<dbReference type="Reactome" id="R-HSA-1474228">
    <property type="pathway name" value="Degradation of the extracellular matrix"/>
</dbReference>
<dbReference type="Reactome" id="R-HSA-1650814">
    <property type="pathway name" value="Collagen biosynthesis and modifying enzymes"/>
</dbReference>
<dbReference type="Reactome" id="R-HSA-2214320">
    <property type="pathway name" value="Anchoring fibril formation"/>
</dbReference>
<dbReference type="Reactome" id="R-HSA-2243919">
    <property type="pathway name" value="Crosslinking of collagen fibrils"/>
</dbReference>
<dbReference type="SignaLink" id="O43897"/>
<dbReference type="BioGRID-ORCS" id="7092">
    <property type="hits" value="7 hits in 1149 CRISPR screens"/>
</dbReference>
<dbReference type="ChiTaRS" id="TLL1">
    <property type="organism name" value="human"/>
</dbReference>
<dbReference type="EvolutionaryTrace" id="O43897"/>
<dbReference type="GeneWiki" id="TLL1"/>
<dbReference type="GenomeRNAi" id="7092"/>
<dbReference type="Pharos" id="O43897">
    <property type="development level" value="Tchem"/>
</dbReference>
<dbReference type="PRO" id="PR:O43897"/>
<dbReference type="Proteomes" id="UP000005640">
    <property type="component" value="Chromosome 4"/>
</dbReference>
<dbReference type="RNAct" id="O43897">
    <property type="molecule type" value="protein"/>
</dbReference>
<dbReference type="Bgee" id="ENSG00000038295">
    <property type="expression patterns" value="Expressed in secondary oocyte and 101 other cell types or tissues"/>
</dbReference>
<dbReference type="ExpressionAtlas" id="O43897">
    <property type="expression patterns" value="baseline and differential"/>
</dbReference>
<dbReference type="GO" id="GO:0005576">
    <property type="term" value="C:extracellular region"/>
    <property type="evidence" value="ECO:0000304"/>
    <property type="project" value="Reactome"/>
</dbReference>
<dbReference type="GO" id="GO:0005615">
    <property type="term" value="C:extracellular space"/>
    <property type="evidence" value="ECO:0000318"/>
    <property type="project" value="GO_Central"/>
</dbReference>
<dbReference type="GO" id="GO:0005509">
    <property type="term" value="F:calcium ion binding"/>
    <property type="evidence" value="ECO:0007669"/>
    <property type="project" value="InterPro"/>
</dbReference>
<dbReference type="GO" id="GO:0004222">
    <property type="term" value="F:metalloendopeptidase activity"/>
    <property type="evidence" value="ECO:0000318"/>
    <property type="project" value="GO_Central"/>
</dbReference>
<dbReference type="GO" id="GO:0004252">
    <property type="term" value="F:serine-type endopeptidase activity"/>
    <property type="evidence" value="ECO:0000304"/>
    <property type="project" value="Reactome"/>
</dbReference>
<dbReference type="GO" id="GO:0008270">
    <property type="term" value="F:zinc ion binding"/>
    <property type="evidence" value="ECO:0007669"/>
    <property type="project" value="InterPro"/>
</dbReference>
<dbReference type="GO" id="GO:0030154">
    <property type="term" value="P:cell differentiation"/>
    <property type="evidence" value="ECO:0007669"/>
    <property type="project" value="UniProtKB-KW"/>
</dbReference>
<dbReference type="GO" id="GO:0030199">
    <property type="term" value="P:collagen fibril organization"/>
    <property type="evidence" value="ECO:0000304"/>
    <property type="project" value="Reactome"/>
</dbReference>
<dbReference type="GO" id="GO:0009953">
    <property type="term" value="P:dorsal/ventral pattern formation"/>
    <property type="evidence" value="ECO:0000318"/>
    <property type="project" value="GO_Central"/>
</dbReference>
<dbReference type="GO" id="GO:0016485">
    <property type="term" value="P:protein processing"/>
    <property type="evidence" value="ECO:0000318"/>
    <property type="project" value="GO_Central"/>
</dbReference>
<dbReference type="GO" id="GO:0001501">
    <property type="term" value="P:skeletal system development"/>
    <property type="evidence" value="ECO:0000304"/>
    <property type="project" value="ProtInc"/>
</dbReference>
<dbReference type="CDD" id="cd00041">
    <property type="entry name" value="CUB"/>
    <property type="match status" value="5"/>
</dbReference>
<dbReference type="CDD" id="cd00054">
    <property type="entry name" value="EGF_CA"/>
    <property type="match status" value="1"/>
</dbReference>
<dbReference type="CDD" id="cd04281">
    <property type="entry name" value="ZnMc_BMP1_TLD"/>
    <property type="match status" value="1"/>
</dbReference>
<dbReference type="FunFam" id="2.10.25.10:FF:000022">
    <property type="entry name" value="Metalloendopeptidase"/>
    <property type="match status" value="2"/>
</dbReference>
<dbReference type="FunFam" id="2.60.120.290:FF:000004">
    <property type="entry name" value="Metalloendopeptidase"/>
    <property type="match status" value="1"/>
</dbReference>
<dbReference type="FunFam" id="2.60.120.290:FF:000007">
    <property type="entry name" value="Metalloendopeptidase"/>
    <property type="match status" value="1"/>
</dbReference>
<dbReference type="FunFam" id="2.60.120.290:FF:000009">
    <property type="entry name" value="Metalloendopeptidase"/>
    <property type="match status" value="1"/>
</dbReference>
<dbReference type="FunFam" id="2.60.120.290:FF:000011">
    <property type="entry name" value="Metalloendopeptidase"/>
    <property type="match status" value="1"/>
</dbReference>
<dbReference type="FunFam" id="2.60.120.290:FF:000014">
    <property type="entry name" value="Metalloendopeptidase"/>
    <property type="match status" value="1"/>
</dbReference>
<dbReference type="FunFam" id="3.40.390.10:FF:000004">
    <property type="entry name" value="Metalloendopeptidase"/>
    <property type="match status" value="1"/>
</dbReference>
<dbReference type="Gene3D" id="3.40.390.10">
    <property type="entry name" value="Collagenase (Catalytic Domain)"/>
    <property type="match status" value="1"/>
</dbReference>
<dbReference type="Gene3D" id="2.10.25.10">
    <property type="entry name" value="Laminin"/>
    <property type="match status" value="2"/>
</dbReference>
<dbReference type="Gene3D" id="2.60.120.290">
    <property type="entry name" value="Spermadhesin, CUB domain"/>
    <property type="match status" value="5"/>
</dbReference>
<dbReference type="InterPro" id="IPR015446">
    <property type="entry name" value="BMP_1/tolloid-like"/>
</dbReference>
<dbReference type="InterPro" id="IPR000859">
    <property type="entry name" value="CUB_dom"/>
</dbReference>
<dbReference type="InterPro" id="IPR001881">
    <property type="entry name" value="EGF-like_Ca-bd_dom"/>
</dbReference>
<dbReference type="InterPro" id="IPR000742">
    <property type="entry name" value="EGF-like_dom"/>
</dbReference>
<dbReference type="InterPro" id="IPR000152">
    <property type="entry name" value="EGF-type_Asp/Asn_hydroxyl_site"/>
</dbReference>
<dbReference type="InterPro" id="IPR018097">
    <property type="entry name" value="EGF_Ca-bd_CS"/>
</dbReference>
<dbReference type="InterPro" id="IPR024079">
    <property type="entry name" value="MetalloPept_cat_dom_sf"/>
</dbReference>
<dbReference type="InterPro" id="IPR001506">
    <property type="entry name" value="Peptidase_M12A"/>
</dbReference>
<dbReference type="InterPro" id="IPR006026">
    <property type="entry name" value="Peptidase_Metallo"/>
</dbReference>
<dbReference type="InterPro" id="IPR035914">
    <property type="entry name" value="Sperma_CUB_dom_sf"/>
</dbReference>
<dbReference type="InterPro" id="IPR034036">
    <property type="entry name" value="ZnMP_TLD/BMP1"/>
</dbReference>
<dbReference type="PANTHER" id="PTHR24251:SF37">
    <property type="entry name" value="CUB DOMAIN-CONTAINING PROTEIN"/>
    <property type="match status" value="1"/>
</dbReference>
<dbReference type="PANTHER" id="PTHR24251">
    <property type="entry name" value="OVOCHYMASE-RELATED"/>
    <property type="match status" value="1"/>
</dbReference>
<dbReference type="Pfam" id="PF01400">
    <property type="entry name" value="Astacin"/>
    <property type="match status" value="1"/>
</dbReference>
<dbReference type="Pfam" id="PF00431">
    <property type="entry name" value="CUB"/>
    <property type="match status" value="5"/>
</dbReference>
<dbReference type="Pfam" id="PF14670">
    <property type="entry name" value="FXa_inhibition"/>
    <property type="match status" value="2"/>
</dbReference>
<dbReference type="PIRSF" id="PIRSF001199">
    <property type="entry name" value="BMP_1/tolloid-like"/>
    <property type="match status" value="1"/>
</dbReference>
<dbReference type="PRINTS" id="PR00480">
    <property type="entry name" value="ASTACIN"/>
</dbReference>
<dbReference type="SMART" id="SM00042">
    <property type="entry name" value="CUB"/>
    <property type="match status" value="5"/>
</dbReference>
<dbReference type="SMART" id="SM00181">
    <property type="entry name" value="EGF"/>
    <property type="match status" value="2"/>
</dbReference>
<dbReference type="SMART" id="SM00179">
    <property type="entry name" value="EGF_CA"/>
    <property type="match status" value="2"/>
</dbReference>
<dbReference type="SMART" id="SM00235">
    <property type="entry name" value="ZnMc"/>
    <property type="match status" value="1"/>
</dbReference>
<dbReference type="SUPFAM" id="SSF57196">
    <property type="entry name" value="EGF/Laminin"/>
    <property type="match status" value="2"/>
</dbReference>
<dbReference type="SUPFAM" id="SSF55486">
    <property type="entry name" value="Metalloproteases ('zincins'), catalytic domain"/>
    <property type="match status" value="1"/>
</dbReference>
<dbReference type="SUPFAM" id="SSF49854">
    <property type="entry name" value="Spermadhesin, CUB domain"/>
    <property type="match status" value="5"/>
</dbReference>
<dbReference type="PROSITE" id="PS51864">
    <property type="entry name" value="ASTACIN"/>
    <property type="match status" value="1"/>
</dbReference>
<dbReference type="PROSITE" id="PS01180">
    <property type="entry name" value="CUB"/>
    <property type="match status" value="5"/>
</dbReference>
<dbReference type="PROSITE" id="PS01186">
    <property type="entry name" value="EGF_2"/>
    <property type="match status" value="2"/>
</dbReference>
<dbReference type="PROSITE" id="PS50026">
    <property type="entry name" value="EGF_3"/>
    <property type="match status" value="2"/>
</dbReference>
<dbReference type="PROSITE" id="PS01187">
    <property type="entry name" value="EGF_CA"/>
    <property type="match status" value="2"/>
</dbReference>
<dbReference type="PROSITE" id="PS00142">
    <property type="entry name" value="ZINC_PROTEASE"/>
    <property type="match status" value="1"/>
</dbReference>
<comment type="function">
    <text>Protease which processes procollagen C-propeptides, such as chordin, pro-biglycan and pro-lysyl oxidase. Required for the embryonic development. Predominant protease, which in the development, influences dorsal-ventral patterning and skeletogenesis.</text>
</comment>
<comment type="cofactor">
    <cofactor evidence="5">
        <name>Zn(2+)</name>
        <dbReference type="ChEBI" id="CHEBI:29105"/>
    </cofactor>
    <text evidence="5">Binds 1 zinc ion per subunit.</text>
</comment>
<comment type="subcellular location">
    <subcellularLocation>
        <location evidence="10">Secreted</location>
    </subcellularLocation>
</comment>
<comment type="alternative products">
    <event type="alternative splicing"/>
    <isoform>
        <id>O43897-1</id>
        <name>1</name>
        <sequence type="displayed"/>
    </isoform>
    <isoform>
        <id>O43897-2</id>
        <name>2</name>
        <sequence type="described" ref="VSP_017197 VSP_017198"/>
    </isoform>
</comment>
<comment type="disease" evidence="8">
    <disease id="DI-02498">
        <name>Atrial septal defect 6</name>
        <acronym>ASD6</acronym>
        <description>A congenital heart malformation characterized by incomplete closure of the wall between the atria resulting in blood flow from the left to the right atria.</description>
        <dbReference type="MIM" id="613087"/>
    </disease>
    <text>The disease is caused by variants affecting the gene represented in this entry.</text>
</comment>
<accession>O43897</accession>
<accession>B2RMU2</accession>
<accession>Q96AN3</accession>
<accession>Q9NQS4</accession>
<feature type="signal peptide" evidence="2">
    <location>
        <begin position="1"/>
        <end position="30"/>
    </location>
</feature>
<feature type="propeptide" id="PRO_0000046023" evidence="2">
    <location>
        <begin position="31"/>
        <end position="147"/>
    </location>
</feature>
<feature type="chain" id="PRO_0000046024" description="Tolloid-like protein 1">
    <location>
        <begin position="148"/>
        <end position="1013"/>
    </location>
</feature>
<feature type="domain" description="Peptidase M12A" evidence="5">
    <location>
        <begin position="148"/>
        <end position="347"/>
    </location>
</feature>
<feature type="domain" description="CUB 1" evidence="3">
    <location>
        <begin position="349"/>
        <end position="461"/>
    </location>
</feature>
<feature type="domain" description="CUB 2" evidence="3">
    <location>
        <begin position="462"/>
        <end position="574"/>
    </location>
</feature>
<feature type="domain" description="EGF-like 1; calcium-binding" evidence="4">
    <location>
        <begin position="574"/>
        <end position="615"/>
    </location>
</feature>
<feature type="domain" description="CUB 3" evidence="3">
    <location>
        <begin position="618"/>
        <end position="730"/>
    </location>
</feature>
<feature type="domain" description="EGF-like 2; calcium-binding" evidence="4">
    <location>
        <begin position="730"/>
        <end position="770"/>
    </location>
</feature>
<feature type="domain" description="CUB 4" evidence="3">
    <location>
        <begin position="774"/>
        <end position="886"/>
    </location>
</feature>
<feature type="domain" description="CUB 5" evidence="3">
    <location>
        <begin position="887"/>
        <end position="1003"/>
    </location>
</feature>
<feature type="active site" evidence="5">
    <location>
        <position position="241"/>
    </location>
</feature>
<feature type="binding site" evidence="5">
    <location>
        <position position="240"/>
    </location>
    <ligand>
        <name>Zn(2+)</name>
        <dbReference type="ChEBI" id="CHEBI:29105"/>
        <note>catalytic</note>
    </ligand>
</feature>
<feature type="binding site" evidence="5">
    <location>
        <position position="244"/>
    </location>
    <ligand>
        <name>Zn(2+)</name>
        <dbReference type="ChEBI" id="CHEBI:29105"/>
        <note>catalytic</note>
    </ligand>
</feature>
<feature type="binding site" evidence="5">
    <location>
        <position position="250"/>
    </location>
    <ligand>
        <name>Zn(2+)</name>
        <dbReference type="ChEBI" id="CHEBI:29105"/>
        <note>catalytic</note>
    </ligand>
</feature>
<feature type="glycosylation site" description="N-linked (GlcNAc...) asparagine" evidence="2">
    <location>
        <position position="169"/>
    </location>
</feature>
<feature type="glycosylation site" description="N-linked (GlcNAc...) asparagine" evidence="2">
    <location>
        <position position="359"/>
    </location>
</feature>
<feature type="glycosylation site" description="N-linked (GlcNAc...) asparagine" evidence="2">
    <location>
        <position position="390"/>
    </location>
</feature>
<feature type="glycosylation site" description="N-linked (GlcNAc...) asparagine" evidence="2">
    <location>
        <position position="626"/>
    </location>
</feature>
<feature type="disulfide bond" evidence="5 7">
    <location>
        <begin position="190"/>
        <end position="346"/>
    </location>
</feature>
<feature type="disulfide bond" evidence="5">
    <location>
        <begin position="210"/>
        <end position="232"/>
    </location>
</feature>
<feature type="disulfide bond" evidence="5">
    <location>
        <begin position="212"/>
        <end position="213"/>
    </location>
</feature>
<feature type="disulfide bond" evidence="1">
    <location>
        <begin position="349"/>
        <end position="375"/>
    </location>
</feature>
<feature type="disulfide bond" evidence="1">
    <location>
        <begin position="402"/>
        <end position="424"/>
    </location>
</feature>
<feature type="disulfide bond" evidence="1">
    <location>
        <begin position="462"/>
        <end position="488"/>
    </location>
</feature>
<feature type="disulfide bond" evidence="1">
    <location>
        <begin position="515"/>
        <end position="537"/>
    </location>
</feature>
<feature type="disulfide bond" evidence="1">
    <location>
        <begin position="578"/>
        <end position="590"/>
    </location>
</feature>
<feature type="disulfide bond" evidence="1">
    <location>
        <begin position="586"/>
        <end position="599"/>
    </location>
</feature>
<feature type="disulfide bond" evidence="1">
    <location>
        <begin position="601"/>
        <end position="614"/>
    </location>
</feature>
<feature type="disulfide bond" evidence="1">
    <location>
        <begin position="618"/>
        <end position="644"/>
    </location>
</feature>
<feature type="disulfide bond" evidence="1">
    <location>
        <begin position="671"/>
        <end position="693"/>
    </location>
</feature>
<feature type="disulfide bond" evidence="1">
    <location>
        <begin position="734"/>
        <end position="745"/>
    </location>
</feature>
<feature type="disulfide bond" evidence="1">
    <location>
        <begin position="741"/>
        <end position="754"/>
    </location>
</feature>
<feature type="disulfide bond" evidence="1">
    <location>
        <begin position="756"/>
        <end position="769"/>
    </location>
</feature>
<feature type="disulfide bond" evidence="1">
    <location>
        <begin position="774"/>
        <end position="800"/>
    </location>
</feature>
<feature type="disulfide bond" evidence="1">
    <location>
        <begin position="827"/>
        <end position="849"/>
    </location>
</feature>
<feature type="disulfide bond" evidence="1">
    <location>
        <begin position="887"/>
        <end position="917"/>
    </location>
</feature>
<feature type="disulfide bond" evidence="1">
    <location>
        <begin position="944"/>
        <end position="966"/>
    </location>
</feature>
<feature type="splice variant" id="VSP_017197" description="In isoform 2." evidence="9">
    <original>IVLNFT</original>
    <variation>VVFSLC</variation>
    <location>
        <begin position="387"/>
        <end position="392"/>
    </location>
</feature>
<feature type="splice variant" id="VSP_017198" description="In isoform 2." evidence="9">
    <location>
        <begin position="393"/>
        <end position="1013"/>
    </location>
</feature>
<feature type="sequence variant" id="VAR_062519" description="In ASD6; dbSNP:rs137852951." evidence="8">
    <original>M</original>
    <variation>L</variation>
    <location>
        <position position="182"/>
    </location>
</feature>
<feature type="sequence variant" id="VAR_062520" description="In ASD6; dbSNP:rs137852952." evidence="8">
    <original>V</original>
    <variation>A</variation>
    <location>
        <position position="238"/>
    </location>
</feature>
<feature type="sequence variant" id="VAR_062521" description="In ASD6; dbSNP:rs137852953." evidence="8">
    <original>I</original>
    <variation>V</variation>
    <location>
        <position position="629"/>
    </location>
</feature>
<feature type="sequence variant" id="VAR_036142" description="In a breast cancer sample; somatic mutation." evidence="6">
    <original>L</original>
    <variation>V</variation>
    <location>
        <position position="688"/>
    </location>
</feature>
<feature type="sequence variant" id="VAR_051585" description="In dbSNP:rs2291822.">
    <original>T</original>
    <variation>A</variation>
    <location>
        <position position="958"/>
    </location>
</feature>
<feature type="sequence conflict" description="In Ref. 2; AAF86287." evidence="10" ref="2">
    <original>I</original>
    <variation>V</variation>
    <location>
        <position position="156"/>
    </location>
</feature>
<feature type="sequence conflict" description="In Ref. 2; AAF86287." evidence="10" ref="2">
    <original>N</original>
    <variation>S</variation>
    <location>
        <position position="221"/>
    </location>
</feature>
<feature type="sequence conflict" description="In Ref. 2; AAF86287." evidence="10" ref="2">
    <original>V</original>
    <variation>A</variation>
    <location>
        <position position="284"/>
    </location>
</feature>
<feature type="helix" evidence="11">
    <location>
        <begin position="153"/>
        <end position="155"/>
    </location>
</feature>
<feature type="helix" evidence="11">
    <location>
        <begin position="158"/>
        <end position="160"/>
    </location>
</feature>
<feature type="strand" evidence="11">
    <location>
        <begin position="161"/>
        <end position="166"/>
    </location>
</feature>
<feature type="helix" evidence="11">
    <location>
        <begin position="172"/>
        <end position="188"/>
    </location>
</feature>
<feature type="strand" evidence="11">
    <location>
        <begin position="192"/>
        <end position="195"/>
    </location>
</feature>
<feature type="strand" evidence="11">
    <location>
        <begin position="203"/>
        <end position="206"/>
    </location>
</feature>
<feature type="strand" evidence="11">
    <location>
        <begin position="224"/>
        <end position="227"/>
    </location>
</feature>
<feature type="helix" evidence="11">
    <location>
        <begin position="235"/>
        <end position="246"/>
    </location>
</feature>
<feature type="helix" evidence="11">
    <location>
        <begin position="251"/>
        <end position="253"/>
    </location>
</feature>
<feature type="helix" evidence="11">
    <location>
        <begin position="257"/>
        <end position="259"/>
    </location>
</feature>
<feature type="strand" evidence="11">
    <location>
        <begin position="261"/>
        <end position="263"/>
    </location>
</feature>
<feature type="helix" evidence="11">
    <location>
        <begin position="265"/>
        <end position="267"/>
    </location>
</feature>
<feature type="helix" evidence="11">
    <location>
        <begin position="273"/>
        <end position="276"/>
    </location>
</feature>
<feature type="helix" evidence="11">
    <location>
        <begin position="281"/>
        <end position="283"/>
    </location>
</feature>
<feature type="turn" evidence="11">
    <location>
        <begin position="301"/>
        <end position="304"/>
    </location>
</feature>
<feature type="strand" evidence="11">
    <location>
        <begin position="305"/>
        <end position="307"/>
    </location>
</feature>
<feature type="strand" evidence="11">
    <location>
        <begin position="312"/>
        <end position="315"/>
    </location>
</feature>
<feature type="helix" evidence="11">
    <location>
        <begin position="334"/>
        <end position="343"/>
    </location>
</feature>
<organism>
    <name type="scientific">Homo sapiens</name>
    <name type="common">Human</name>
    <dbReference type="NCBI Taxonomy" id="9606"/>
    <lineage>
        <taxon>Eukaryota</taxon>
        <taxon>Metazoa</taxon>
        <taxon>Chordata</taxon>
        <taxon>Craniata</taxon>
        <taxon>Vertebrata</taxon>
        <taxon>Euteleostomi</taxon>
        <taxon>Mammalia</taxon>
        <taxon>Eutheria</taxon>
        <taxon>Euarchontoglires</taxon>
        <taxon>Primates</taxon>
        <taxon>Haplorrhini</taxon>
        <taxon>Catarrhini</taxon>
        <taxon>Hominidae</taxon>
        <taxon>Homo</taxon>
    </lineage>
</organism>
<keyword id="KW-0002">3D-structure</keyword>
<keyword id="KW-0025">Alternative splicing</keyword>
<keyword id="KW-0976">Atrial septal defect</keyword>
<keyword id="KW-0106">Calcium</keyword>
<keyword id="KW-0217">Developmental protein</keyword>
<keyword id="KW-0221">Differentiation</keyword>
<keyword id="KW-0225">Disease variant</keyword>
<keyword id="KW-1015">Disulfide bond</keyword>
<keyword id="KW-0245">EGF-like domain</keyword>
<keyword id="KW-0325">Glycoprotein</keyword>
<keyword id="KW-0378">Hydrolase</keyword>
<keyword id="KW-0479">Metal-binding</keyword>
<keyword id="KW-0482">Metalloprotease</keyword>
<keyword id="KW-0645">Protease</keyword>
<keyword id="KW-1267">Proteomics identification</keyword>
<keyword id="KW-1185">Reference proteome</keyword>
<keyword id="KW-0677">Repeat</keyword>
<keyword id="KW-0964">Secreted</keyword>
<keyword id="KW-0732">Signal</keyword>
<keyword id="KW-0862">Zinc</keyword>
<keyword id="KW-0865">Zymogen</keyword>
<reference key="1">
    <citation type="submission" date="1997-03" db="EMBL/GenBank/DDBJ databases">
        <title>Sequence of human mammalian tolloid-like (mTll) and chromosomal localization of the cognate gene TLL.</title>
        <authorList>
            <person name="Greenspan D.S."/>
            <person name="Takahara K."/>
        </authorList>
    </citation>
    <scope>NUCLEOTIDE SEQUENCE [MRNA] (ISOFORM 1)</scope>
    <source>
        <tissue>Placenta</tissue>
    </source>
</reference>
<reference key="2">
    <citation type="submission" date="2000-06" db="EMBL/GenBank/DDBJ databases">
        <title>Human cardiac/brain tolloid-like protein.</title>
        <authorList>
            <person name="Arleth A.J."/>
            <person name="Elshourbagy N.A."/>
            <person name="Li X."/>
            <person name="Willette R.N."/>
        </authorList>
    </citation>
    <scope>NUCLEOTIDE SEQUENCE [MRNA] (ISOFORM 1)</scope>
    <source>
        <tissue>Heart</tissue>
    </source>
</reference>
<reference key="3">
    <citation type="submission" date="2005-09" db="EMBL/GenBank/DDBJ databases">
        <authorList>
            <person name="Mural R.J."/>
            <person name="Istrail S."/>
            <person name="Sutton G.G."/>
            <person name="Florea L."/>
            <person name="Halpern A.L."/>
            <person name="Mobarry C.M."/>
            <person name="Lippert R."/>
            <person name="Walenz B."/>
            <person name="Shatkay H."/>
            <person name="Dew I."/>
            <person name="Miller J.R."/>
            <person name="Flanigan M.J."/>
            <person name="Edwards N.J."/>
            <person name="Bolanos R."/>
            <person name="Fasulo D."/>
            <person name="Halldorsson B.V."/>
            <person name="Hannenhalli S."/>
            <person name="Turner R."/>
            <person name="Yooseph S."/>
            <person name="Lu F."/>
            <person name="Nusskern D.R."/>
            <person name="Shue B.C."/>
            <person name="Zheng X.H."/>
            <person name="Zhong F."/>
            <person name="Delcher A.L."/>
            <person name="Huson D.H."/>
            <person name="Kravitz S.A."/>
            <person name="Mouchard L."/>
            <person name="Reinert K."/>
            <person name="Remington K.A."/>
            <person name="Clark A.G."/>
            <person name="Waterman M.S."/>
            <person name="Eichler E.E."/>
            <person name="Adams M.D."/>
            <person name="Hunkapiller M.W."/>
            <person name="Myers E.W."/>
            <person name="Venter J.C."/>
        </authorList>
    </citation>
    <scope>NUCLEOTIDE SEQUENCE [LARGE SCALE GENOMIC DNA]</scope>
</reference>
<reference key="4">
    <citation type="journal article" date="2004" name="Genome Res.">
        <title>The status, quality, and expansion of the NIH full-length cDNA project: the Mammalian Gene Collection (MGC).</title>
        <authorList>
            <consortium name="The MGC Project Team"/>
        </authorList>
    </citation>
    <scope>NUCLEOTIDE SEQUENCE [LARGE SCALE MRNA] (ISOFORMS 1 AND 2)</scope>
    <source>
        <tissue>Prostate</tissue>
    </source>
</reference>
<reference key="5">
    <citation type="journal article" date="1999" name="Dev. Biol.">
        <title>Mammalian BMP-1/Tolloid-related metalloproteinases, including novel family member mammalian Tolloid-like 2, have differential enzymatic activities and distributions of expression relevant to patterning and skeletogenesis.</title>
        <authorList>
            <person name="Scott I.C."/>
            <person name="Blitz I.L."/>
            <person name="Pappano W.N."/>
            <person name="Imamura Y."/>
            <person name="Clark T.G."/>
            <person name="Steiglitz B.M."/>
            <person name="Thomas C.L."/>
            <person name="Maas S.A."/>
            <person name="Takahara K."/>
            <person name="Cho K.W."/>
            <person name="Greenspan D.S."/>
        </authorList>
    </citation>
    <scope>CHARACTERIZATION OF ACTION ON COLLAGENS</scope>
</reference>
<reference key="6">
    <citation type="journal article" date="2000" name="J. Biol. Chem.">
        <title>Bone morphogenetic protein-1 processes probiglycan.</title>
        <authorList>
            <person name="Scott I.C."/>
            <person name="Imamura Y."/>
            <person name="Pappano W.N."/>
            <person name="Troedel J.M."/>
            <person name="Recklies A.D."/>
            <person name="Roughley P.J."/>
            <person name="Greenspan D.S."/>
        </authorList>
    </citation>
    <scope>CHARACTERIZATION OF ACTION ON PROBIGLYCAN</scope>
</reference>
<reference key="7">
    <citation type="journal article" date="2001" name="J. Biol. Chem.">
        <title>Multiple bone morphogenetic protein 1-related mammalian metalloproteinases process pro-lysyl oxidase at the correct physiological site and control lysyl oxidase activation in mouse embryo fibroblast cultures.</title>
        <authorList>
            <person name="Uzel M.I."/>
            <person name="Scott I.C."/>
            <person name="Babakhanlou-Chase H."/>
            <person name="Palamakumbura A.H."/>
            <person name="Pappano W.N."/>
            <person name="Hong H.-H."/>
            <person name="Greenspan D.S."/>
            <person name="Trackman P.C."/>
        </authorList>
    </citation>
    <scope>CHARACTERIZATION OF ACTION ON PRO-LYSYL OXIDASE</scope>
</reference>
<reference key="8">
    <citation type="journal article" date="2008" name="J. Mol. Biol.">
        <title>Structural basis for the substrate specificity of bone morphogenetic protein 1/tolloid-like metalloproteases.</title>
        <authorList>
            <person name="Mac Sweeney A."/>
            <person name="Gil-Parrado S."/>
            <person name="Vinzenz D."/>
            <person name="Bernardi A."/>
            <person name="Hein A."/>
            <person name="Bodendorf U."/>
            <person name="Erbel P."/>
            <person name="Logel C."/>
            <person name="Gerhartz B."/>
        </authorList>
    </citation>
    <scope>X-RAY CRYSTALLOGRAPHY (1.4 ANGSTROMS) OF 148-348</scope>
    <scope>DISULFIDE BONDS</scope>
</reference>
<reference key="9">
    <citation type="journal article" date="2006" name="Science">
        <title>The consensus coding sequences of human breast and colorectal cancers.</title>
        <authorList>
            <person name="Sjoeblom T."/>
            <person name="Jones S."/>
            <person name="Wood L.D."/>
            <person name="Parsons D.W."/>
            <person name="Lin J."/>
            <person name="Barber T.D."/>
            <person name="Mandelker D."/>
            <person name="Leary R.J."/>
            <person name="Ptak J."/>
            <person name="Silliman N."/>
            <person name="Szabo S."/>
            <person name="Buckhaults P."/>
            <person name="Farrell C."/>
            <person name="Meeh P."/>
            <person name="Markowitz S.D."/>
            <person name="Willis J."/>
            <person name="Dawson D."/>
            <person name="Willson J.K.V."/>
            <person name="Gazdar A.F."/>
            <person name="Hartigan J."/>
            <person name="Wu L."/>
            <person name="Liu C."/>
            <person name="Parmigiani G."/>
            <person name="Park B.H."/>
            <person name="Bachman K.E."/>
            <person name="Papadopoulos N."/>
            <person name="Vogelstein B."/>
            <person name="Kinzler K.W."/>
            <person name="Velculescu V.E."/>
        </authorList>
    </citation>
    <scope>VARIANT [LARGE SCALE ANALYSIS] VAL-688</scope>
</reference>
<reference key="10">
    <citation type="journal article" date="2009" name="Eur. J. Hum. Genet.">
        <title>Mutations in mammalian tolloid-like 1 gene detected in adult patients with ASD.</title>
        <authorList>
            <person name="Stanczak P."/>
            <person name="Witecka J."/>
            <person name="Szydlo A."/>
            <person name="Gutmajster E."/>
            <person name="Lisik M."/>
            <person name="Augusciak-Duma A."/>
            <person name="Tarnowski M."/>
            <person name="Czekaj T."/>
            <person name="Czekaj H."/>
            <person name="Sieron A.L."/>
        </authorList>
    </citation>
    <scope>VARIANTS ASD6 LEU-182; ALA-238 AND VAL-629</scope>
</reference>
<protein>
    <recommendedName>
        <fullName>Tolloid-like protein 1</fullName>
        <ecNumber>3.4.24.-</ecNumber>
    </recommendedName>
</protein>
<name>TLL1_HUMAN</name>
<sequence>MGLGTLSPRMLVWLVASGIVFYGELWVCAGLDYDYTFDGNEEDKTETIDYKDPCKAAVFWGDIALDDEDLNIFQIDRTIDLTQNPFGNLGHTTGGLGDHAMSKKRGALYQLIDRIRRIGFGLEQNNTVKGKVPLQFSGQNEKNRVPRAATSRTERIWPGGVIPYVIGGNFTGSQRAMFKQAMRHWEKHTCVTFIERSDEESYIVFTYRPCGCCSYVGRRGNGPQAISIGKNCDKFGIVVHELGHVIGFWHEHTRPDRDNHVTIIRENIQPGQEYNFLKMEPGEVNSLGERYDFDSIMHYARNTFSRGMFLDTILPSRDDNGIRPAIGQRTRLSKGDIAQARKLYRCPACGETLQESNGNLSSPGFPNGYPSYTHCIWRVSVTPGEKIVLNFTTMDLYKSSLCWYDYIEVRDGYWRKSPLLGRFCGDKLPEVLTSTDSRMWIEFRSSSNWVGKGFAAVYEAICGGEIRKNEGQIQSPNYPDDYRPMKECVWKITVSESYHVGLTFQSFEIERHDNCAYDYLEVRDGTSENSPLIGRFCGYDKPEDIRSTSNTLWMKFVSDGTVNKAGFAANFFKEEDECAKPDRGGCEQRCLNTLGSYQCACEPGYELGPDRRSCEAACGGLLTKLNGTITTPGWPKEYPPNKNCVWQVVAPTQYRISVKFEFFELEGNEVCKYDYVEIWSGLSSESKLHGKFCGAEVPEVITSQFNNMRIEFKSDNTVSKKGFKAHFFSDKDECSKDNGGCQHECVNTMGSYMCQCRNGFVLHDNKHDCKEAECEQKIHSPSGLITSPNWPDKYPSRKECTWEISATPGHRIKLAFSEFEIEQHQECAYDHLEVFDGETEKSPILGRLCGNKIPDPLVATGNKMFVRFVSDASVQRKGFQATHSTECGGRLKAESKPRDLYSHAQFGDNNYPGQVDCEWLLVSERGSRLELSFQTFEVEEEADCGYDYVELFDGLDSTAVGLGRFCGSGPPEEIYSIGDSVLIHFHTDDTINKKGFHIRYKSIRYPDTTHTKK</sequence>